<sequence length="659" mass="72860">MLLISNPRHLGHPMSPGNWKRLIILLSCVFGGAEMNQQHNNPHQPMTLTWQVLSQTGSVVWEKKAVEPPWTWWPSLEPDVCALVAGLESWDIPELTASASQQARPPDSNYEHAYNQITWGTLGCSYPRARTRIARSQFYVCPRDGRSLSEARRCGGLESLYCKEWGCETAGTAYWQPRSSWDLITVGQGHPTGTCERTGWCNPLKIEFTEPGKRFRNWLQGRTWGLRFYVTGHPGVQLTIRLVITSPPPVVVGPDPVLAEQGPPRKIPFLPRVPVPTLSPPASPIPTVQASPPAPSTPSPTTGDRLFGLVQGAFLALNATNPEATESCWLCLALGPPYYEGIATPGQVTYASTDSQCRWGGKGKLTLTEVSGLGLCIGKVPPTHQHLCNLTIPLNASHTHKYLLPSNRSWWACNSGLTPCLSTSVFNQSNDFCIQIQLVPRIYYHPDGTLLQAYESPHSRNKREPVSLTLAVLLGLGVAAGIGTGSTALIKGPIDLQQGLTSLQIAMDTDLRALQDSISKLEDSLTSLSEVVLQNRRGLDLLFLKEGGLCAALKEECCFYVDHSGAVRDSMRRLKERLDKRQLEHQKNLSWYEGWFNRSPWLTTLLSALAGPLLLLLLLLTLGPCVINKLVQFINDRVSAVRILVLRHKYQTLDNEDNL</sequence>
<reference key="1">
    <citation type="journal article" date="2000" name="J. Virol.">
        <title>The nucleotide sequence of koala (Phascolarctos cinereus) retrovirus: a novel type C endogenous virus related to Gibbon ape leukemia virus.</title>
        <authorList>
            <person name="Hanger J.J."/>
            <person name="Bromham L.D."/>
            <person name="McKee J.J."/>
            <person name="O'Brien T.M."/>
            <person name="Robinson W.F."/>
        </authorList>
    </citation>
    <scope>NUCLEOTIDE SEQUENCE [GENOMIC DNA]</scope>
</reference>
<evidence type="ECO:0000250" key="1"/>
<evidence type="ECO:0000255" key="2"/>
<evidence type="ECO:0000256" key="3">
    <source>
        <dbReference type="SAM" id="MobiDB-lite"/>
    </source>
</evidence>
<keyword id="KW-0165">Cleavage on pair of basic residues</keyword>
<keyword id="KW-0175">Coiled coil</keyword>
<keyword id="KW-1015">Disulfide bond</keyword>
<keyword id="KW-1169">Fusion of virus membrane with host cell membrane</keyword>
<keyword id="KW-1168">Fusion of virus membrane with host membrane</keyword>
<keyword id="KW-0325">Glycoprotein</keyword>
<keyword id="KW-1032">Host cell membrane</keyword>
<keyword id="KW-1043">Host membrane</keyword>
<keyword id="KW-0945">Host-virus interaction</keyword>
<keyword id="KW-0449">Lipoprotein</keyword>
<keyword id="KW-0472">Membrane</keyword>
<keyword id="KW-0564">Palmitate</keyword>
<keyword id="KW-0732">Signal</keyword>
<keyword id="KW-0812">Transmembrane</keyword>
<keyword id="KW-1133">Transmembrane helix</keyword>
<keyword id="KW-1161">Viral attachment to host cell</keyword>
<keyword id="KW-0261">Viral envelope protein</keyword>
<keyword id="KW-1162">Viral penetration into host cytoplasm</keyword>
<keyword id="KW-0946">Virion</keyword>
<keyword id="KW-1160">Virus entry into host cell</keyword>
<organismHost>
    <name type="scientific">Phascolarctos cinereus</name>
    <name type="common">Koala</name>
    <dbReference type="NCBI Taxonomy" id="38626"/>
</organismHost>
<gene>
    <name type="primary">env</name>
</gene>
<name>ENV_KORV</name>
<organism>
    <name type="scientific">Koala retrovirus</name>
    <name type="common">KoRV</name>
    <dbReference type="NCBI Taxonomy" id="394239"/>
    <lineage>
        <taxon>Viruses</taxon>
        <taxon>Riboviria</taxon>
        <taxon>Pararnavirae</taxon>
        <taxon>Artverviricota</taxon>
        <taxon>Revtraviricetes</taxon>
        <taxon>Ortervirales</taxon>
        <taxon>Retroviridae</taxon>
        <taxon>Orthoretrovirinae</taxon>
        <taxon>Gammaretrovirus</taxon>
    </lineage>
</organism>
<feature type="signal peptide" evidence="2">
    <location>
        <begin position="1"/>
        <end position="35"/>
    </location>
</feature>
<feature type="chain" id="PRO_0000249423" description="Envelope glycoprotein">
    <location>
        <begin position="36"/>
        <end position="659"/>
    </location>
</feature>
<feature type="chain" id="PRO_0000249424" description="Surface protein" evidence="1">
    <location>
        <begin position="36"/>
        <end position="463"/>
    </location>
</feature>
<feature type="chain" id="PRO_0000249425" description="Transmembrane protein" evidence="1">
    <location>
        <begin position="464"/>
        <end position="659"/>
    </location>
</feature>
<feature type="peptide" id="PRO_0000249426" description="R-peptide" evidence="1">
    <location>
        <begin position="645"/>
        <end position="659"/>
    </location>
</feature>
<feature type="topological domain" description="Extracellular" evidence="2">
    <location>
        <begin position="36"/>
        <end position="606"/>
    </location>
</feature>
<feature type="transmembrane region" description="Helical" evidence="2">
    <location>
        <begin position="607"/>
        <end position="627"/>
    </location>
</feature>
<feature type="topological domain" description="Cytoplasmic" evidence="2">
    <location>
        <begin position="628"/>
        <end position="659"/>
    </location>
</feature>
<feature type="region of interest" description="Disordered" evidence="3">
    <location>
        <begin position="278"/>
        <end position="301"/>
    </location>
</feature>
<feature type="region of interest" description="Fusion peptide" evidence="1">
    <location>
        <begin position="466"/>
        <end position="486"/>
    </location>
</feature>
<feature type="region of interest" description="Immunosuppression" evidence="1">
    <location>
        <begin position="533"/>
        <end position="549"/>
    </location>
</feature>
<feature type="coiled-coil region" evidence="2">
    <location>
        <begin position="506"/>
        <end position="532"/>
    </location>
</feature>
<feature type="coiled-coil region" evidence="2">
    <location>
        <begin position="567"/>
        <end position="587"/>
    </location>
</feature>
<feature type="short sequence motif" description="CXXC" evidence="1">
    <location>
        <begin position="328"/>
        <end position="331"/>
    </location>
</feature>
<feature type="short sequence motif" description="CX6CC" evidence="1">
    <location>
        <begin position="550"/>
        <end position="558"/>
    </location>
</feature>
<feature type="short sequence motif" description="YXXL motif; contains endocytosis signal" evidence="1">
    <location>
        <begin position="650"/>
        <end position="653"/>
    </location>
</feature>
<feature type="site" description="Cleavage; by host" evidence="1">
    <location>
        <begin position="463"/>
        <end position="464"/>
    </location>
</feature>
<feature type="site" description="Cleavage; by viral protease" evidence="1">
    <location>
        <begin position="643"/>
        <end position="644"/>
    </location>
</feature>
<feature type="lipid moiety-binding region" description="S-palmitoyl cysteine; by host" evidence="1">
    <location>
        <position position="625"/>
    </location>
</feature>
<feature type="glycosylation site" description="N-linked (GlcNAc...) asparagine; by host" evidence="2">
    <location>
        <position position="318"/>
    </location>
</feature>
<feature type="glycosylation site" description="N-linked (GlcNAc...) asparagine; by host" evidence="2">
    <location>
        <position position="389"/>
    </location>
</feature>
<feature type="glycosylation site" description="N-linked (GlcNAc...) asparagine; by host" evidence="2">
    <location>
        <position position="395"/>
    </location>
</feature>
<feature type="glycosylation site" description="N-linked (GlcNAc...) asparagine; by host" evidence="2">
    <location>
        <position position="407"/>
    </location>
</feature>
<feature type="glycosylation site" description="N-linked (GlcNAc...) asparagine; by host" evidence="2">
    <location>
        <position position="427"/>
    </location>
</feature>
<feature type="disulfide bond" evidence="1">
    <location>
        <begin position="141"/>
        <end position="162"/>
    </location>
</feature>
<feature type="disulfide bond" evidence="1">
    <location>
        <begin position="154"/>
        <end position="167"/>
    </location>
</feature>
<feature type="disulfide bond" description="Interchain (between SU and TM chains, or C-357 with C-584); in linked form" evidence="1">
    <location>
        <begin position="328"/>
        <end position="558"/>
    </location>
</feature>
<feature type="disulfide bond" evidence="1">
    <location>
        <begin position="328"/>
        <end position="331"/>
    </location>
</feature>
<feature type="disulfide bond" evidence="1">
    <location>
        <begin position="550"/>
        <end position="557"/>
    </location>
</feature>
<comment type="function">
    <text evidence="1">The surface protein (SU) attaches the virus to the host cell by binding to its receptor. This interaction triggers the refolding of the transmembrane protein (TM) and is thought to activate its fusogenic potential by unmasking its fusion peptide. Fusion occurs at the host cell plasma membrane (By similarity).</text>
</comment>
<comment type="function">
    <text evidence="1">The transmembrane protein (TM) acts as a class I viral fusion protein. Under the current model, the protein has at least 3 conformational states: pre-fusion native state, pre-hairpin intermediate state, and post-fusion hairpin state. During viral and target cell membrane fusion, the coiled coil regions (heptad repeats) assume a trimer-of-hairpins structure, positioning the fusion peptide in close proximity to the C-terminal region of the ectodomain. The formation of this structure appears to drive apposition and subsequent fusion of viral and target cell membranes. Membranes fusion leads to delivery of the nucleocapsid into the cytoplasm (By similarity).</text>
</comment>
<comment type="subunit">
    <text evidence="1">The mature envelope protein (Env) consists of a trimer of SU-TM heterodimers attached by a labile interchain disulfide bond.</text>
</comment>
<comment type="subcellular location">
    <molecule>Transmembrane protein</molecule>
    <subcellularLocation>
        <location evidence="1">Virion membrane</location>
        <topology evidence="1">Single-pass type I membrane protein</topology>
    </subcellularLocation>
    <subcellularLocation>
        <location evidence="1">Host cell membrane</location>
        <topology evidence="1">Single-pass type I membrane protein</topology>
    </subcellularLocation>
</comment>
<comment type="subcellular location">
    <molecule>Surface protein</molecule>
    <subcellularLocation>
        <location>Virion membrane</location>
        <topology>Peripheral membrane protein</topology>
    </subcellularLocation>
    <subcellularLocation>
        <location evidence="1">Host cell membrane</location>
        <topology evidence="1">Peripheral membrane protein</topology>
    </subcellularLocation>
    <text evidence="1">The surface protein is not anchored to the viral envelope, but associates with the extravirion surface through its binding to TM. Both proteins are thought to be concentrated at the site of budding and incorporated into the virions possibly by contacts between the cytoplasmic tail of Env and the N-terminus of Gag (By similarity).</text>
</comment>
<comment type="subcellular location">
    <molecule>R-peptide</molecule>
    <subcellularLocation>
        <location evidence="1">Host cell membrane</location>
        <topology evidence="1">Peripheral membrane protein</topology>
    </subcellularLocation>
    <text evidence="1">The R-peptide is membrane-associated through its palmitate.</text>
</comment>
<comment type="domain">
    <text evidence="1">The 17 amino acids long immunosuppressive region is present in many retroviral envelope proteins. Synthetic peptides derived from this relatively conserved sequence inhibit immune function in vitro and in vivo (By similarity).</text>
</comment>
<comment type="domain">
    <text evidence="1">The YXXL motif is involved in determining the exact site of viral release at the surface of infected mononuclear cells and promotes endocytosis.</text>
</comment>
<comment type="PTM">
    <text evidence="1">Specific enzymatic cleavages in vivo yield mature proteins. Envelope glycoproteins are synthesized as an inactive precursor that is N-glycosylated and processed likely by host cell furin or by a furin-like protease in the Golgi to yield the mature SU and TM proteins. The cleavage site between SU and TM requires the minimal sequence [KR]-X-[KR]-R. The R-peptide is released from the C-terminus of the cytoplasmic tail of the TM protein upon particle formation as a result of proteolytic cleavage by the viral protease. Cleavage of this peptide is required for TM to become fusogenic (By similarity).</text>
</comment>
<comment type="PTM">
    <text evidence="1">The CXXC motif is highly conserved across a broad range of retroviral envelope proteins. It is thought to participate in the formation of a labile disulfide bond possibly with the CX6CC motif present in the transmembrane protein. Isomerization of the intersubunit disulfide bond to an SU intrachain disulfide bond is thought to occur upon receptor recognition in order to allow membrane fusion (By similarity).</text>
</comment>
<comment type="PTM">
    <text evidence="1">The transmembrane protein is palmitoylated.</text>
</comment>
<comment type="PTM">
    <text evidence="1">The R-peptide is palmitoylated.</text>
</comment>
<comment type="miscellaneous">
    <text>Koala retrovirus is both a circulating virus and an endogenous retrovirus of koala, except in some isolated populations in south Australia.</text>
</comment>
<protein>
    <recommendedName>
        <fullName>Envelope glycoprotein</fullName>
    </recommendedName>
    <alternativeName>
        <fullName>Env polyprotein</fullName>
    </alternativeName>
    <component>
        <recommendedName>
            <fullName>Surface protein</fullName>
            <shortName>SU</shortName>
        </recommendedName>
        <alternativeName>
            <fullName>Glycoprotein 70</fullName>
            <shortName>gp70</shortName>
        </alternativeName>
    </component>
    <component>
        <recommendedName>
            <fullName>Transmembrane protein</fullName>
            <shortName>TM</shortName>
        </recommendedName>
        <alternativeName>
            <fullName>Envelope protein p15E</fullName>
        </alternativeName>
    </component>
    <component>
        <recommendedName>
            <fullName>R-peptide</fullName>
        </recommendedName>
        <alternativeName>
            <fullName>p2E</fullName>
        </alternativeName>
    </component>
</protein>
<dbReference type="EMBL" id="AF151794">
    <property type="protein sequence ID" value="AAF15099.1"/>
    <property type="molecule type" value="Genomic_DNA"/>
</dbReference>
<dbReference type="RefSeq" id="YP_009513212.1">
    <property type="nucleotide sequence ID" value="NC_039228.1"/>
</dbReference>
<dbReference type="SMR" id="Q9TTC0"/>
<dbReference type="GlyCosmos" id="Q9TTC0">
    <property type="glycosylation" value="5 sites, No reported glycans"/>
</dbReference>
<dbReference type="GeneID" id="37627220"/>
<dbReference type="OrthoDB" id="1612at10239"/>
<dbReference type="Proteomes" id="UP000007765">
    <property type="component" value="Segment"/>
</dbReference>
<dbReference type="GO" id="GO:0020002">
    <property type="term" value="C:host cell plasma membrane"/>
    <property type="evidence" value="ECO:0007669"/>
    <property type="project" value="UniProtKB-SubCell"/>
</dbReference>
<dbReference type="GO" id="GO:0016020">
    <property type="term" value="C:membrane"/>
    <property type="evidence" value="ECO:0007669"/>
    <property type="project" value="UniProtKB-KW"/>
</dbReference>
<dbReference type="GO" id="GO:0019031">
    <property type="term" value="C:viral envelope"/>
    <property type="evidence" value="ECO:0007669"/>
    <property type="project" value="UniProtKB-KW"/>
</dbReference>
<dbReference type="GO" id="GO:0055036">
    <property type="term" value="C:virion membrane"/>
    <property type="evidence" value="ECO:0007669"/>
    <property type="project" value="UniProtKB-SubCell"/>
</dbReference>
<dbReference type="GO" id="GO:0019064">
    <property type="term" value="P:fusion of virus membrane with host plasma membrane"/>
    <property type="evidence" value="ECO:0007669"/>
    <property type="project" value="UniProtKB-KW"/>
</dbReference>
<dbReference type="GO" id="GO:0046718">
    <property type="term" value="P:symbiont entry into host cell"/>
    <property type="evidence" value="ECO:0007669"/>
    <property type="project" value="UniProtKB-KW"/>
</dbReference>
<dbReference type="GO" id="GO:0019062">
    <property type="term" value="P:virion attachment to host cell"/>
    <property type="evidence" value="ECO:0007669"/>
    <property type="project" value="UniProtKB-KW"/>
</dbReference>
<dbReference type="CDD" id="cd09851">
    <property type="entry name" value="HTLV-1-like_HR1-HR2"/>
    <property type="match status" value="1"/>
</dbReference>
<dbReference type="Gene3D" id="1.10.287.210">
    <property type="match status" value="1"/>
</dbReference>
<dbReference type="Gene3D" id="3.90.310.10">
    <property type="entry name" value="ENV polyprotein, receptor-binding domain"/>
    <property type="match status" value="1"/>
</dbReference>
<dbReference type="InterPro" id="IPR008981">
    <property type="entry name" value="FMuLV_rcpt-bd"/>
</dbReference>
<dbReference type="InterPro" id="IPR018154">
    <property type="entry name" value="TLV/ENV_coat_polyprotein"/>
</dbReference>
<dbReference type="PANTHER" id="PTHR10424:SF82">
    <property type="entry name" value="ENVELOPE GLYCOPROTEIN-RELATED"/>
    <property type="match status" value="1"/>
</dbReference>
<dbReference type="PANTHER" id="PTHR10424">
    <property type="entry name" value="VIRAL ENVELOPE PROTEIN"/>
    <property type="match status" value="1"/>
</dbReference>
<dbReference type="Pfam" id="PF00429">
    <property type="entry name" value="TLV_coat"/>
    <property type="match status" value="1"/>
</dbReference>
<dbReference type="SUPFAM" id="SSF49830">
    <property type="entry name" value="ENV polyprotein, receptor-binding domain"/>
    <property type="match status" value="1"/>
</dbReference>
<dbReference type="SUPFAM" id="SSF58069">
    <property type="entry name" value="Virus ectodomain"/>
    <property type="match status" value="1"/>
</dbReference>
<accession>Q9TTC0</accession>
<proteinExistence type="inferred from homology"/>